<sequence>MTKPATTPAILALADGSIFRGESIGADGQTIGEVVFNTAMTGYQEILTDPSYAKQIVTLTYPHVGNTGTTPQDAESWKVWAAGLVIRDLPLLASNWRNKQSLPDYLKENDTVAIAGIDTRRLTRILREKGAQNGCILAGADATEEKALELARSFPGLKGMDLAKEVSVKERYEWRYSLWNLETDSHPEIPASELPYHVVAYDYGVKYNILRMLVARGCRVTVLPAQTPASEALALNPDGIFLANGPGDPEPCDYAIRAIQEVLETDIPVFGICLGHQLLALASGAITVKMPSGHHGANHPVQDLETGVVMITSQNHGFCADEASLPANLRATHKSLFDGTLQGIERTDKVAFGFQGHPEASPGPCDVAPLFDRFISAMAPVVDR</sequence>
<reference key="1">
    <citation type="journal article" date="1990" name="J. Bacteriol.">
        <title>Unorthodox expression of an enzyme: evidence for an untranslated region within carA from Pseudomonas aeruginosa.</title>
        <authorList>
            <person name="Wong S.C."/>
            <person name="Abdelal A.T."/>
        </authorList>
    </citation>
    <scope>PRELIMINARY NUCLEOTIDE SEQUENCE [GENOMIC DNA]</scope>
</reference>
<reference key="2">
    <citation type="journal article" date="1994" name="J. Bacteriol.">
        <title>Structure and regulation of the carAB operon in Pseudomonas aeruginosa and Pseudomonas stutzeri: no untranslated region exists.</title>
        <authorList>
            <person name="Kwon D.-H."/>
            <person name="Lu C.-D."/>
            <person name="Walthall D.A."/>
            <person name="Brown T.M."/>
            <person name="Houghton J.E."/>
            <person name="Abdelal A.T."/>
        </authorList>
    </citation>
    <scope>NUCLEOTIDE SEQUENCE [GENOMIC DNA]</scope>
    <source>
        <strain>DSM 10701 / IAM 15110 / JCM 21571 / JM300</strain>
    </source>
</reference>
<comment type="function">
    <text evidence="1">Small subunit of the glutamine-dependent carbamoyl phosphate synthetase (CPSase). CPSase catalyzes the formation of carbamoyl phosphate from the ammonia moiety of glutamine, carbonate, and phosphate donated by ATP, constituting the first step of 2 biosynthetic pathways, one leading to arginine and/or urea and the other to pyrimidine nucleotides. The small subunit (glutamine amidotransferase) binds and cleaves glutamine to supply the large subunit with the substrate ammonia.</text>
</comment>
<comment type="catalytic activity">
    <reaction evidence="1">
        <text>hydrogencarbonate + L-glutamine + 2 ATP + H2O = carbamoyl phosphate + L-glutamate + 2 ADP + phosphate + 2 H(+)</text>
        <dbReference type="Rhea" id="RHEA:18633"/>
        <dbReference type="ChEBI" id="CHEBI:15377"/>
        <dbReference type="ChEBI" id="CHEBI:15378"/>
        <dbReference type="ChEBI" id="CHEBI:17544"/>
        <dbReference type="ChEBI" id="CHEBI:29985"/>
        <dbReference type="ChEBI" id="CHEBI:30616"/>
        <dbReference type="ChEBI" id="CHEBI:43474"/>
        <dbReference type="ChEBI" id="CHEBI:58228"/>
        <dbReference type="ChEBI" id="CHEBI:58359"/>
        <dbReference type="ChEBI" id="CHEBI:456216"/>
        <dbReference type="EC" id="6.3.5.5"/>
    </reaction>
</comment>
<comment type="catalytic activity">
    <molecule>Carbamoyl phosphate synthase small chain</molecule>
    <reaction evidence="1">
        <text>L-glutamine + H2O = L-glutamate + NH4(+)</text>
        <dbReference type="Rhea" id="RHEA:15889"/>
        <dbReference type="ChEBI" id="CHEBI:15377"/>
        <dbReference type="ChEBI" id="CHEBI:28938"/>
        <dbReference type="ChEBI" id="CHEBI:29985"/>
        <dbReference type="ChEBI" id="CHEBI:58359"/>
    </reaction>
</comment>
<comment type="pathway">
    <text evidence="1">Amino-acid biosynthesis; L-arginine biosynthesis; carbamoyl phosphate from bicarbonate: step 1/1.</text>
</comment>
<comment type="pathway">
    <text evidence="1">Pyrimidine metabolism; UMP biosynthesis via de novo pathway; (S)-dihydroorotate from bicarbonate: step 1/3.</text>
</comment>
<comment type="subunit">
    <text evidence="1">Composed of two chains; the small (or glutamine) chain promotes the hydrolysis of glutamine to ammonia, which is used by the large (or ammonia) chain to synthesize carbamoyl phosphate. Tetramer of heterodimers (alpha,beta)4.</text>
</comment>
<comment type="similarity">
    <text evidence="1">Belongs to the CarA family.</text>
</comment>
<comment type="caution">
    <text evidence="2">PubMed:2153657 sequence was originally thought to originate from Pseudomonas aeruginosa.</text>
</comment>
<accession>P38099</accession>
<accession>P20597</accession>
<proteinExistence type="inferred from homology"/>
<keyword id="KW-0028">Amino-acid biosynthesis</keyword>
<keyword id="KW-0055">Arginine biosynthesis</keyword>
<keyword id="KW-0067">ATP-binding</keyword>
<keyword id="KW-0315">Glutamine amidotransferase</keyword>
<keyword id="KW-0436">Ligase</keyword>
<keyword id="KW-0547">Nucleotide-binding</keyword>
<keyword id="KW-0665">Pyrimidine biosynthesis</keyword>
<protein>
    <recommendedName>
        <fullName evidence="1">Carbamoyl phosphate synthase small chain</fullName>
        <ecNumber evidence="1">6.3.5.5</ecNumber>
    </recommendedName>
    <alternativeName>
        <fullName evidence="1">Carbamoyl phosphate synthetase glutamine chain</fullName>
    </alternativeName>
</protein>
<name>CARA_STUST</name>
<organism>
    <name type="scientific">Stutzerimonas stutzeri</name>
    <name type="common">Pseudomonas stutzeri</name>
    <dbReference type="NCBI Taxonomy" id="316"/>
    <lineage>
        <taxon>Bacteria</taxon>
        <taxon>Pseudomonadati</taxon>
        <taxon>Pseudomonadota</taxon>
        <taxon>Gammaproteobacteria</taxon>
        <taxon>Pseudomonadales</taxon>
        <taxon>Pseudomonadaceae</taxon>
        <taxon>Stutzerimonas</taxon>
    </lineage>
</organism>
<dbReference type="EC" id="6.3.5.5" evidence="1"/>
<dbReference type="EMBL" id="M33818">
    <property type="protein sequence ID" value="AAA25763.1"/>
    <property type="molecule type" value="Genomic_DNA"/>
</dbReference>
<dbReference type="EMBL" id="U04993">
    <property type="protein sequence ID" value="AAA19049.1"/>
    <property type="molecule type" value="Unassigned_DNA"/>
</dbReference>
<dbReference type="PIR" id="A35111">
    <property type="entry name" value="A35111"/>
</dbReference>
<dbReference type="PIR" id="E55580">
    <property type="entry name" value="E55580"/>
</dbReference>
<dbReference type="SMR" id="P38099"/>
<dbReference type="MEROPS" id="C26.954"/>
<dbReference type="eggNOG" id="COG0505">
    <property type="taxonomic scope" value="Bacteria"/>
</dbReference>
<dbReference type="UniPathway" id="UPA00068">
    <property type="reaction ID" value="UER00171"/>
</dbReference>
<dbReference type="UniPathway" id="UPA00070">
    <property type="reaction ID" value="UER00115"/>
</dbReference>
<dbReference type="GO" id="GO:0005524">
    <property type="term" value="F:ATP binding"/>
    <property type="evidence" value="ECO:0007669"/>
    <property type="project" value="UniProtKB-UniRule"/>
</dbReference>
<dbReference type="GO" id="GO:0004088">
    <property type="term" value="F:carbamoyl-phosphate synthase (glutamine-hydrolyzing) activity"/>
    <property type="evidence" value="ECO:0007669"/>
    <property type="project" value="UniProtKB-UniRule"/>
</dbReference>
<dbReference type="GO" id="GO:0004359">
    <property type="term" value="F:glutaminase activity"/>
    <property type="evidence" value="ECO:0007669"/>
    <property type="project" value="RHEA"/>
</dbReference>
<dbReference type="GO" id="GO:0006207">
    <property type="term" value="P:'de novo' pyrimidine nucleobase biosynthetic process"/>
    <property type="evidence" value="ECO:0007669"/>
    <property type="project" value="InterPro"/>
</dbReference>
<dbReference type="GO" id="GO:0044205">
    <property type="term" value="P:'de novo' UMP biosynthetic process"/>
    <property type="evidence" value="ECO:0007669"/>
    <property type="project" value="UniProtKB-UniRule"/>
</dbReference>
<dbReference type="GO" id="GO:0006541">
    <property type="term" value="P:glutamine metabolic process"/>
    <property type="evidence" value="ECO:0007669"/>
    <property type="project" value="InterPro"/>
</dbReference>
<dbReference type="GO" id="GO:0006526">
    <property type="term" value="P:L-arginine biosynthetic process"/>
    <property type="evidence" value="ECO:0007669"/>
    <property type="project" value="UniProtKB-UniRule"/>
</dbReference>
<dbReference type="CDD" id="cd01744">
    <property type="entry name" value="GATase1_CPSase"/>
    <property type="match status" value="1"/>
</dbReference>
<dbReference type="FunFam" id="3.40.50.880:FF:000011">
    <property type="entry name" value="Carbamoyl-phosphate synthase small chain"/>
    <property type="match status" value="1"/>
</dbReference>
<dbReference type="FunFam" id="3.50.30.20:FF:000001">
    <property type="entry name" value="Carbamoyl-phosphate synthase small chain"/>
    <property type="match status" value="1"/>
</dbReference>
<dbReference type="Gene3D" id="3.40.50.880">
    <property type="match status" value="1"/>
</dbReference>
<dbReference type="Gene3D" id="3.50.30.20">
    <property type="entry name" value="Carbamoyl-phosphate synthase small subunit, N-terminal domain"/>
    <property type="match status" value="1"/>
</dbReference>
<dbReference type="HAMAP" id="MF_01209">
    <property type="entry name" value="CPSase_S_chain"/>
    <property type="match status" value="1"/>
</dbReference>
<dbReference type="InterPro" id="IPR050472">
    <property type="entry name" value="Anth_synth/Amidotransfase"/>
</dbReference>
<dbReference type="InterPro" id="IPR006274">
    <property type="entry name" value="CarbamoylP_synth_ssu"/>
</dbReference>
<dbReference type="InterPro" id="IPR002474">
    <property type="entry name" value="CarbamoylP_synth_ssu_N"/>
</dbReference>
<dbReference type="InterPro" id="IPR036480">
    <property type="entry name" value="CarbP_synth_ssu_N_sf"/>
</dbReference>
<dbReference type="InterPro" id="IPR029062">
    <property type="entry name" value="Class_I_gatase-like"/>
</dbReference>
<dbReference type="InterPro" id="IPR035686">
    <property type="entry name" value="CPSase_GATase1"/>
</dbReference>
<dbReference type="InterPro" id="IPR017926">
    <property type="entry name" value="GATASE"/>
</dbReference>
<dbReference type="NCBIfam" id="TIGR01368">
    <property type="entry name" value="CPSaseIIsmall"/>
    <property type="match status" value="1"/>
</dbReference>
<dbReference type="NCBIfam" id="NF009475">
    <property type="entry name" value="PRK12838.1"/>
    <property type="match status" value="1"/>
</dbReference>
<dbReference type="PANTHER" id="PTHR43418:SF7">
    <property type="entry name" value="CARBAMOYL-PHOSPHATE SYNTHASE SMALL CHAIN"/>
    <property type="match status" value="1"/>
</dbReference>
<dbReference type="PANTHER" id="PTHR43418">
    <property type="entry name" value="MULTIFUNCTIONAL TRYPTOPHAN BIOSYNTHESIS PROTEIN-RELATED"/>
    <property type="match status" value="1"/>
</dbReference>
<dbReference type="Pfam" id="PF00988">
    <property type="entry name" value="CPSase_sm_chain"/>
    <property type="match status" value="1"/>
</dbReference>
<dbReference type="Pfam" id="PF00117">
    <property type="entry name" value="GATase"/>
    <property type="match status" value="1"/>
</dbReference>
<dbReference type="PRINTS" id="PR00097">
    <property type="entry name" value="ANTSNTHASEII"/>
</dbReference>
<dbReference type="PRINTS" id="PR00099">
    <property type="entry name" value="CPSGATASE"/>
</dbReference>
<dbReference type="PRINTS" id="PR00096">
    <property type="entry name" value="GATASE"/>
</dbReference>
<dbReference type="SMART" id="SM01097">
    <property type="entry name" value="CPSase_sm_chain"/>
    <property type="match status" value="1"/>
</dbReference>
<dbReference type="SUPFAM" id="SSF52021">
    <property type="entry name" value="Carbamoyl phosphate synthetase, small subunit N-terminal domain"/>
    <property type="match status" value="1"/>
</dbReference>
<dbReference type="SUPFAM" id="SSF52317">
    <property type="entry name" value="Class I glutamine amidotransferase-like"/>
    <property type="match status" value="1"/>
</dbReference>
<dbReference type="PROSITE" id="PS51273">
    <property type="entry name" value="GATASE_TYPE_1"/>
    <property type="match status" value="1"/>
</dbReference>
<gene>
    <name evidence="1" type="primary">carA</name>
</gene>
<evidence type="ECO:0000255" key="1">
    <source>
        <dbReference type="HAMAP-Rule" id="MF_01209"/>
    </source>
</evidence>
<evidence type="ECO:0000305" key="2"/>
<feature type="chain" id="PRO_0000112307" description="Carbamoyl phosphate synthase small chain">
    <location>
        <begin position="1"/>
        <end position="384"/>
    </location>
</feature>
<feature type="domain" description="Glutamine amidotransferase type-1" evidence="1">
    <location>
        <begin position="197"/>
        <end position="384"/>
    </location>
</feature>
<feature type="region of interest" description="CPSase" evidence="1">
    <location>
        <begin position="1"/>
        <end position="193"/>
    </location>
</feature>
<feature type="active site" description="Nucleophile" evidence="1">
    <location>
        <position position="273"/>
    </location>
</feature>
<feature type="active site" evidence="1">
    <location>
        <position position="357"/>
    </location>
</feature>
<feature type="active site" evidence="1">
    <location>
        <position position="359"/>
    </location>
</feature>
<feature type="binding site" evidence="1">
    <location>
        <position position="51"/>
    </location>
    <ligand>
        <name>L-glutamine</name>
        <dbReference type="ChEBI" id="CHEBI:58359"/>
    </ligand>
</feature>
<feature type="binding site" evidence="1">
    <location>
        <position position="245"/>
    </location>
    <ligand>
        <name>L-glutamine</name>
        <dbReference type="ChEBI" id="CHEBI:58359"/>
    </ligand>
</feature>
<feature type="binding site" evidence="1">
    <location>
        <position position="247"/>
    </location>
    <ligand>
        <name>L-glutamine</name>
        <dbReference type="ChEBI" id="CHEBI:58359"/>
    </ligand>
</feature>
<feature type="binding site" evidence="1">
    <location>
        <position position="274"/>
    </location>
    <ligand>
        <name>L-glutamine</name>
        <dbReference type="ChEBI" id="CHEBI:58359"/>
    </ligand>
</feature>
<feature type="binding site" evidence="1">
    <location>
        <position position="277"/>
    </location>
    <ligand>
        <name>L-glutamine</name>
        <dbReference type="ChEBI" id="CHEBI:58359"/>
    </ligand>
</feature>
<feature type="binding site" evidence="1">
    <location>
        <position position="315"/>
    </location>
    <ligand>
        <name>L-glutamine</name>
        <dbReference type="ChEBI" id="CHEBI:58359"/>
    </ligand>
</feature>
<feature type="binding site" evidence="1">
    <location>
        <position position="317"/>
    </location>
    <ligand>
        <name>L-glutamine</name>
        <dbReference type="ChEBI" id="CHEBI:58359"/>
    </ligand>
</feature>
<feature type="binding site" evidence="1">
    <location>
        <position position="318"/>
    </location>
    <ligand>
        <name>L-glutamine</name>
        <dbReference type="ChEBI" id="CHEBI:58359"/>
    </ligand>
</feature>
<feature type="sequence conflict" description="In Ref. 1; AAA25763." evidence="2" ref="1">
    <original>E</original>
    <variation>Q</variation>
    <location>
        <position position="33"/>
    </location>
</feature>
<feature type="sequence conflict" description="In Ref. 1." evidence="2" ref="1">
    <original>D</original>
    <variation>S</variation>
    <location>
        <position position="73"/>
    </location>
</feature>
<feature type="sequence conflict" description="In Ref. 1." evidence="2" ref="1">
    <original>E</original>
    <variation>R</variation>
    <location>
        <position position="75"/>
    </location>
</feature>
<feature type="sequence conflict" description="In Ref. 1; AAA25763." evidence="2" ref="1">
    <original>D</original>
    <variation>S</variation>
    <location>
        <position position="104"/>
    </location>
</feature>
<feature type="sequence conflict" description="In Ref. 1; AAA25763." evidence="2" ref="1">
    <original>A</original>
    <variation>G</variation>
    <location>
        <position position="234"/>
    </location>
</feature>
<feature type="sequence conflict" description="In Ref. 1; AAA25763." evidence="2" ref="1">
    <original>L</original>
    <variation>V</variation>
    <location>
        <position position="279"/>
    </location>
</feature>
<feature type="sequence conflict" description="In Ref. 1; AAA25763." evidence="2" ref="1">
    <original>SL</original>
    <variation>AV</variation>
    <location>
        <begin position="324"/>
        <end position="325"/>
    </location>
</feature>
<feature type="sequence conflict" description="In Ref. 1; AAA25763." evidence="2" ref="1">
    <original>G</original>
    <variation>S</variation>
    <location>
        <position position="353"/>
    </location>
</feature>